<evidence type="ECO:0000250" key="1">
    <source>
        <dbReference type="UniProtKB" id="P45563"/>
    </source>
</evidence>
<evidence type="ECO:0000250" key="2">
    <source>
        <dbReference type="UniProtKB" id="P9WP01"/>
    </source>
</evidence>
<evidence type="ECO:0000255" key="3"/>
<evidence type="ECO:0000269" key="4">
    <source>
    </source>
</evidence>
<evidence type="ECO:0000305" key="5"/>
<evidence type="ECO:0007829" key="6">
    <source>
        <dbReference type="PDB" id="1C3X"/>
    </source>
</evidence>
<evidence type="ECO:0007829" key="7">
    <source>
        <dbReference type="PDB" id="1QE5"/>
    </source>
</evidence>
<comment type="function">
    <text evidence="4">The purine nucleoside phosphorylases catalyze the phosphorolytic breakdown of the N-glycosidic bond in the beta-(deoxy)ribonucleoside molecules, with the formation of the corresponding free purine bases and pentose-1-phosphate. Cleaves guanosine, inosine, 2'-deoxyguanosine and 2'-deoxyinosine.</text>
</comment>
<comment type="catalytic activity">
    <reaction evidence="4">
        <text>a purine 2'-deoxy-D-ribonucleoside + phosphate = a purine nucleobase + 2-deoxy-alpha-D-ribose 1-phosphate</text>
        <dbReference type="Rhea" id="RHEA:36431"/>
        <dbReference type="ChEBI" id="CHEBI:26386"/>
        <dbReference type="ChEBI" id="CHEBI:43474"/>
        <dbReference type="ChEBI" id="CHEBI:57259"/>
        <dbReference type="ChEBI" id="CHEBI:142361"/>
        <dbReference type="EC" id="2.4.2.1"/>
    </reaction>
</comment>
<comment type="pathway">
    <text>Purine metabolism; purine nucleoside salvage.</text>
</comment>
<comment type="subunit">
    <text evidence="4">Homotrimer.</text>
</comment>
<comment type="similarity">
    <text evidence="5">Belongs to the PNP/MTAP phosphorylase family.</text>
</comment>
<accession>P81989</accession>
<protein>
    <recommendedName>
        <fullName>Purine nucleoside phosphorylase</fullName>
        <shortName>PNP</shortName>
        <shortName>Pu-NPase</shortName>
        <ecNumber>2.4.2.1</ecNumber>
    </recommendedName>
    <alternativeName>
        <fullName>Inosine phosphorylase</fullName>
    </alternativeName>
    <alternativeName>
        <fullName>Inosine-guanosine phosphorylase</fullName>
    </alternativeName>
</protein>
<sequence>TTTTPPSTPPLDDPATDPFLVARAAADHIAQATGVEGHDMALVLGSGWGGAAELLGEVVAEVPTHEIPGFSAPAVAGHLSVTRSIRVERADGSVRHALVLGSRTHLYEGKGVRAVVHGVRTAAATGAETLILTNGCGGLNQEWGAGTPVLLSDHINLTARSPLEGPTFVDLTDVYSPRLRELAHRVDPTLPEGVYAQFPGPHYETPAEVRMAGILGADLVGMSTTLEAIAARHCGLEVLGVSLVTNLAAGISPTPLSHAEVIEAGQAAGPRISALLADIAKR</sequence>
<name>PUNA_CELSP</name>
<dbReference type="EC" id="2.4.2.1"/>
<dbReference type="PDB" id="1C3X">
    <property type="method" value="X-ray"/>
    <property type="resolution" value="2.40 A"/>
    <property type="chains" value="A/B/C=9-282"/>
</dbReference>
<dbReference type="PDB" id="1QE5">
    <property type="method" value="X-ray"/>
    <property type="resolution" value="2.20 A"/>
    <property type="chains" value="A/B/C=9-282"/>
</dbReference>
<dbReference type="PDBsum" id="1C3X"/>
<dbReference type="PDBsum" id="1QE5"/>
<dbReference type="SMR" id="P81989"/>
<dbReference type="DrugBank" id="DB02985">
    <property type="generic name" value="8-iodo-guanine"/>
</dbReference>
<dbReference type="BRENDA" id="2.4.2.1">
    <property type="organism ID" value="1235"/>
</dbReference>
<dbReference type="UniPathway" id="UPA00606"/>
<dbReference type="EvolutionaryTrace" id="P81989"/>
<dbReference type="GO" id="GO:0005737">
    <property type="term" value="C:cytoplasm"/>
    <property type="evidence" value="ECO:0007669"/>
    <property type="project" value="TreeGrafter"/>
</dbReference>
<dbReference type="GO" id="GO:0004731">
    <property type="term" value="F:purine-nucleoside phosphorylase activity"/>
    <property type="evidence" value="ECO:0007669"/>
    <property type="project" value="UniProtKB-EC"/>
</dbReference>
<dbReference type="GO" id="GO:0009116">
    <property type="term" value="P:nucleoside metabolic process"/>
    <property type="evidence" value="ECO:0007669"/>
    <property type="project" value="InterPro"/>
</dbReference>
<dbReference type="CDD" id="cd09009">
    <property type="entry name" value="PNP-EcPNPII_like"/>
    <property type="match status" value="1"/>
</dbReference>
<dbReference type="Gene3D" id="3.40.50.1580">
    <property type="entry name" value="Nucleoside phosphorylase domain"/>
    <property type="match status" value="1"/>
</dbReference>
<dbReference type="InterPro" id="IPR000845">
    <property type="entry name" value="Nucleoside_phosphorylase_d"/>
</dbReference>
<dbReference type="InterPro" id="IPR035994">
    <property type="entry name" value="Nucleoside_phosphorylase_sf"/>
</dbReference>
<dbReference type="InterPro" id="IPR011269">
    <property type="entry name" value="PUNP"/>
</dbReference>
<dbReference type="InterPro" id="IPR011268">
    <property type="entry name" value="Purine_phosphorylase"/>
</dbReference>
<dbReference type="InterPro" id="IPR018099">
    <property type="entry name" value="Purine_phosphorylase-2_CS"/>
</dbReference>
<dbReference type="NCBIfam" id="TIGR01697">
    <property type="entry name" value="PNPH-PUNA-XAPA"/>
    <property type="match status" value="1"/>
</dbReference>
<dbReference type="NCBIfam" id="NF006054">
    <property type="entry name" value="PRK08202.1"/>
    <property type="match status" value="1"/>
</dbReference>
<dbReference type="NCBIfam" id="TIGR01698">
    <property type="entry name" value="PUNP"/>
    <property type="match status" value="1"/>
</dbReference>
<dbReference type="PANTHER" id="PTHR11904">
    <property type="entry name" value="METHYLTHIOADENOSINE/PURINE NUCLEOSIDE PHOSPHORYLASE"/>
    <property type="match status" value="1"/>
</dbReference>
<dbReference type="PANTHER" id="PTHR11904:SF9">
    <property type="entry name" value="PURINE NUCLEOSIDE PHOSPHORYLASE-RELATED"/>
    <property type="match status" value="1"/>
</dbReference>
<dbReference type="Pfam" id="PF01048">
    <property type="entry name" value="PNP_UDP_1"/>
    <property type="match status" value="1"/>
</dbReference>
<dbReference type="PIRSF" id="PIRSF000477">
    <property type="entry name" value="PurNPase"/>
    <property type="match status" value="1"/>
</dbReference>
<dbReference type="SUPFAM" id="SSF53167">
    <property type="entry name" value="Purine and uridine phosphorylases"/>
    <property type="match status" value="1"/>
</dbReference>
<dbReference type="PROSITE" id="PS01240">
    <property type="entry name" value="PNP_MTAP_2"/>
    <property type="match status" value="1"/>
</dbReference>
<gene>
    <name type="primary">punA</name>
</gene>
<organism>
    <name type="scientific">Cellulomonas sp</name>
    <dbReference type="NCBI Taxonomy" id="40001"/>
    <lineage>
        <taxon>Bacteria</taxon>
        <taxon>Bacillati</taxon>
        <taxon>Actinomycetota</taxon>
        <taxon>Actinomycetes</taxon>
        <taxon>Micrococcales</taxon>
        <taxon>Cellulomonadaceae</taxon>
        <taxon>Cellulomonas</taxon>
    </lineage>
</organism>
<reference key="1">
    <citation type="journal article" date="1999" name="J. Mol. Biol.">
        <title>Crystal structure of the purine nucleoside phosphorylase (PNP) from Cellulomonas sp. and its implication for the mechanism of trimeric PNPs.</title>
        <authorList>
            <person name="Tebbe J."/>
            <person name="Bzowska A."/>
            <person name="Wielgus-Kutrowska B."/>
            <person name="Schroeder W."/>
            <person name="Kazimierczuk Z."/>
            <person name="Shugar D."/>
            <person name="Saenger W."/>
            <person name="Koellner G."/>
        </authorList>
    </citation>
    <scope>PROTEIN SEQUENCE</scope>
    <scope>X-RAY CRYSTALLOGRAPHY (2.2 ANGSTROMS)</scope>
    <scope>FUNCTION</scope>
    <scope>CATALYTIC ACTIVITY</scope>
    <scope>SUBUNIT</scope>
</reference>
<feature type="chain" id="PRO_0000184541" description="Purine nucleoside phosphorylase">
    <location>
        <begin position="1"/>
        <end position="282"/>
    </location>
</feature>
<feature type="active site" evidence="3">
    <location>
        <position position="204"/>
    </location>
</feature>
<feature type="binding site" evidence="2">
    <location>
        <position position="46"/>
    </location>
    <ligand>
        <name>phosphate</name>
        <dbReference type="ChEBI" id="CHEBI:43474"/>
    </ligand>
</feature>
<feature type="binding site" evidence="1">
    <location>
        <position position="78"/>
    </location>
    <ligand>
        <name>phosphate</name>
        <dbReference type="ChEBI" id="CHEBI:43474"/>
    </ligand>
</feature>
<feature type="binding site" evidence="1">
    <location>
        <begin position="103"/>
        <end position="105"/>
    </location>
    <ligand>
        <name>phosphate</name>
        <dbReference type="ChEBI" id="CHEBI:43474"/>
    </ligand>
</feature>
<feature type="binding site" evidence="1">
    <location>
        <position position="204"/>
    </location>
    <ligand>
        <name>a purine D-ribonucleoside</name>
        <dbReference type="ChEBI" id="CHEBI:142355"/>
    </ligand>
</feature>
<feature type="binding site" evidence="1">
    <location>
        <position position="223"/>
    </location>
    <ligand>
        <name>phosphate</name>
        <dbReference type="ChEBI" id="CHEBI:43474"/>
    </ligand>
</feature>
<feature type="binding site" evidence="1">
    <location>
        <position position="246"/>
    </location>
    <ligand>
        <name>a purine D-ribonucleoside</name>
        <dbReference type="ChEBI" id="CHEBI:142355"/>
    </ligand>
</feature>
<feature type="helix" evidence="7">
    <location>
        <begin position="18"/>
        <end position="33"/>
    </location>
</feature>
<feature type="strand" evidence="7">
    <location>
        <begin position="39"/>
        <end position="43"/>
    </location>
</feature>
<feature type="turn" evidence="7">
    <location>
        <begin position="49"/>
        <end position="54"/>
    </location>
</feature>
<feature type="strand" evidence="7">
    <location>
        <begin position="57"/>
        <end position="63"/>
    </location>
</feature>
<feature type="helix" evidence="7">
    <location>
        <begin position="64"/>
        <end position="66"/>
    </location>
</feature>
<feature type="strand" evidence="7">
    <location>
        <begin position="81"/>
        <end position="88"/>
    </location>
</feature>
<feature type="strand" evidence="7">
    <location>
        <begin position="94"/>
        <end position="99"/>
    </location>
</feature>
<feature type="helix" evidence="7">
    <location>
        <begin position="106"/>
        <end position="108"/>
    </location>
</feature>
<feature type="helix" evidence="7">
    <location>
        <begin position="112"/>
        <end position="115"/>
    </location>
</feature>
<feature type="helix" evidence="7">
    <location>
        <begin position="117"/>
        <end position="124"/>
    </location>
</feature>
<feature type="strand" evidence="7">
    <location>
        <begin position="129"/>
        <end position="138"/>
    </location>
</feature>
<feature type="strand" evidence="7">
    <location>
        <begin position="148"/>
        <end position="156"/>
    </location>
</feature>
<feature type="helix" evidence="7">
    <location>
        <begin position="177"/>
        <end position="186"/>
    </location>
</feature>
<feature type="strand" evidence="7">
    <location>
        <begin position="192"/>
        <end position="197"/>
    </location>
</feature>
<feature type="helix" evidence="7">
    <location>
        <begin position="206"/>
        <end position="215"/>
    </location>
</feature>
<feature type="strand" evidence="7">
    <location>
        <begin position="218"/>
        <end position="224"/>
    </location>
</feature>
<feature type="helix" evidence="7">
    <location>
        <begin position="225"/>
        <end position="233"/>
    </location>
</feature>
<feature type="strand" evidence="7">
    <location>
        <begin position="237"/>
        <end position="247"/>
    </location>
</feature>
<feature type="turn" evidence="7">
    <location>
        <begin position="249"/>
        <end position="251"/>
    </location>
</feature>
<feature type="strand" evidence="6">
    <location>
        <begin position="252"/>
        <end position="254"/>
    </location>
</feature>
<feature type="helix" evidence="7">
    <location>
        <begin position="258"/>
        <end position="280"/>
    </location>
</feature>
<proteinExistence type="evidence at protein level"/>
<keyword id="KW-0002">3D-structure</keyword>
<keyword id="KW-0903">Direct protein sequencing</keyword>
<keyword id="KW-0328">Glycosyltransferase</keyword>
<keyword id="KW-0808">Transferase</keyword>